<protein>
    <recommendedName>
        <fullName evidence="1">UDP-3-O-acylglucosamine N-acyltransferase</fullName>
        <ecNumber evidence="1">2.3.1.191</ecNumber>
    </recommendedName>
</protein>
<accession>A2BW42</accession>
<feature type="chain" id="PRO_1000050949" description="UDP-3-O-acylglucosamine N-acyltransferase">
    <location>
        <begin position="1"/>
        <end position="344"/>
    </location>
</feature>
<feature type="active site" description="Proton acceptor" evidence="1">
    <location>
        <position position="248"/>
    </location>
</feature>
<sequence length="344" mass="37147">MLLSKLVDLIKSGNSNFIKANIFENIDIQNAASLDVASKNQISFLEENNILKENLGRTAVSAIITFNNSEILGLLESKNISNIVVENPRIAFAEVLNYLYEQINFNPGIDDSVVMKESSKLGENCYLGPNVYIGENTVIGNNNKIFPGTTILGNVRLGDNNIIHPNCVIYENTRIENNCVINSNTVIGSEGFGFIPQDGKWIKMPQKGSVIIKSFVEIGTNCCVDRPSVGNTLIDEGTKIDNLVQIGHGVKIGKNCALAAQVGIAGGAVIGDGVILAGQVGVNNRVKVGNNVIASSKCGIHCDIEDGEVVSGFPAMKNKSWLRSSSIFKKLPELAKKLRQLDKK</sequence>
<evidence type="ECO:0000255" key="1">
    <source>
        <dbReference type="HAMAP-Rule" id="MF_00523"/>
    </source>
</evidence>
<keyword id="KW-0012">Acyltransferase</keyword>
<keyword id="KW-0441">Lipid A biosynthesis</keyword>
<keyword id="KW-0444">Lipid biosynthesis</keyword>
<keyword id="KW-0443">Lipid metabolism</keyword>
<keyword id="KW-0677">Repeat</keyword>
<keyword id="KW-0808">Transferase</keyword>
<reference key="1">
    <citation type="journal article" date="2007" name="PLoS Genet.">
        <title>Patterns and implications of gene gain and loss in the evolution of Prochlorococcus.</title>
        <authorList>
            <person name="Kettler G.C."/>
            <person name="Martiny A.C."/>
            <person name="Huang K."/>
            <person name="Zucker J."/>
            <person name="Coleman M.L."/>
            <person name="Rodrigue S."/>
            <person name="Chen F."/>
            <person name="Lapidus A."/>
            <person name="Ferriera S."/>
            <person name="Johnson J."/>
            <person name="Steglich C."/>
            <person name="Church G.M."/>
            <person name="Richardson P."/>
            <person name="Chisholm S.W."/>
        </authorList>
    </citation>
    <scope>NUCLEOTIDE SEQUENCE [LARGE SCALE GENOMIC DNA]</scope>
    <source>
        <strain>MIT 9515</strain>
    </source>
</reference>
<comment type="function">
    <text evidence="1">Catalyzes the N-acylation of UDP-3-O-acylglucosamine using 3-hydroxyacyl-ACP as the acyl donor. Is involved in the biosynthesis of lipid A, a phosphorylated glycolipid that anchors the lipopolysaccharide to the outer membrane of the cell.</text>
</comment>
<comment type="catalytic activity">
    <reaction evidence="1">
        <text>a UDP-3-O-[(3R)-3-hydroxyacyl]-alpha-D-glucosamine + a (3R)-hydroxyacyl-[ACP] = a UDP-2-N,3-O-bis[(3R)-3-hydroxyacyl]-alpha-D-glucosamine + holo-[ACP] + H(+)</text>
        <dbReference type="Rhea" id="RHEA:53836"/>
        <dbReference type="Rhea" id="RHEA-COMP:9685"/>
        <dbReference type="Rhea" id="RHEA-COMP:9945"/>
        <dbReference type="ChEBI" id="CHEBI:15378"/>
        <dbReference type="ChEBI" id="CHEBI:64479"/>
        <dbReference type="ChEBI" id="CHEBI:78827"/>
        <dbReference type="ChEBI" id="CHEBI:137740"/>
        <dbReference type="ChEBI" id="CHEBI:137748"/>
        <dbReference type="EC" id="2.3.1.191"/>
    </reaction>
</comment>
<comment type="pathway">
    <text evidence="1">Bacterial outer membrane biogenesis; LPS lipid A biosynthesis.</text>
</comment>
<comment type="subunit">
    <text evidence="1">Homotrimer.</text>
</comment>
<comment type="similarity">
    <text evidence="1">Belongs to the transferase hexapeptide repeat family. LpxD subfamily.</text>
</comment>
<dbReference type="EC" id="2.3.1.191" evidence="1"/>
<dbReference type="EMBL" id="CP000552">
    <property type="protein sequence ID" value="ABM72003.1"/>
    <property type="molecule type" value="Genomic_DNA"/>
</dbReference>
<dbReference type="RefSeq" id="WP_011820108.1">
    <property type="nucleotide sequence ID" value="NC_008817.1"/>
</dbReference>
<dbReference type="SMR" id="A2BW42"/>
<dbReference type="STRING" id="167542.P9515_07941"/>
<dbReference type="GeneID" id="60201547"/>
<dbReference type="KEGG" id="pmc:P9515_07941"/>
<dbReference type="eggNOG" id="COG1044">
    <property type="taxonomic scope" value="Bacteria"/>
</dbReference>
<dbReference type="HOGENOM" id="CLU_049865_0_0_3"/>
<dbReference type="OrthoDB" id="9784739at2"/>
<dbReference type="UniPathway" id="UPA00973"/>
<dbReference type="Proteomes" id="UP000001589">
    <property type="component" value="Chromosome"/>
</dbReference>
<dbReference type="GO" id="GO:0031470">
    <property type="term" value="C:carboxysome"/>
    <property type="evidence" value="ECO:0007669"/>
    <property type="project" value="UniProtKB-ARBA"/>
</dbReference>
<dbReference type="GO" id="GO:0016020">
    <property type="term" value="C:membrane"/>
    <property type="evidence" value="ECO:0007669"/>
    <property type="project" value="GOC"/>
</dbReference>
<dbReference type="GO" id="GO:0016410">
    <property type="term" value="F:N-acyltransferase activity"/>
    <property type="evidence" value="ECO:0007669"/>
    <property type="project" value="InterPro"/>
</dbReference>
<dbReference type="GO" id="GO:0043886">
    <property type="term" value="F:structural constituent of carboxysome shell"/>
    <property type="evidence" value="ECO:0007669"/>
    <property type="project" value="UniProtKB-ARBA"/>
</dbReference>
<dbReference type="GO" id="GO:0009245">
    <property type="term" value="P:lipid A biosynthetic process"/>
    <property type="evidence" value="ECO:0007669"/>
    <property type="project" value="UniProtKB-UniRule"/>
</dbReference>
<dbReference type="CDD" id="cd03352">
    <property type="entry name" value="LbH_LpxD"/>
    <property type="match status" value="1"/>
</dbReference>
<dbReference type="Gene3D" id="2.160.10.10">
    <property type="entry name" value="Hexapeptide repeat proteins"/>
    <property type="match status" value="1"/>
</dbReference>
<dbReference type="Gene3D" id="3.40.1390.10">
    <property type="entry name" value="MurE/MurF, N-terminal domain"/>
    <property type="match status" value="1"/>
</dbReference>
<dbReference type="HAMAP" id="MF_00523">
    <property type="entry name" value="LpxD"/>
    <property type="match status" value="1"/>
</dbReference>
<dbReference type="InterPro" id="IPR001451">
    <property type="entry name" value="Hexapep"/>
</dbReference>
<dbReference type="InterPro" id="IPR018357">
    <property type="entry name" value="Hexapep_transf_CS"/>
</dbReference>
<dbReference type="InterPro" id="IPR007691">
    <property type="entry name" value="LpxD"/>
</dbReference>
<dbReference type="InterPro" id="IPR011004">
    <property type="entry name" value="Trimer_LpxA-like_sf"/>
</dbReference>
<dbReference type="InterPro" id="IPR020573">
    <property type="entry name" value="UDP_GlcNAc_AcTrfase_non-rep"/>
</dbReference>
<dbReference type="NCBIfam" id="TIGR01853">
    <property type="entry name" value="lipid_A_lpxD"/>
    <property type="match status" value="1"/>
</dbReference>
<dbReference type="NCBIfam" id="NF002060">
    <property type="entry name" value="PRK00892.1"/>
    <property type="match status" value="1"/>
</dbReference>
<dbReference type="PANTHER" id="PTHR43378">
    <property type="entry name" value="UDP-3-O-ACYLGLUCOSAMINE N-ACYLTRANSFERASE"/>
    <property type="match status" value="1"/>
</dbReference>
<dbReference type="PANTHER" id="PTHR43378:SF2">
    <property type="entry name" value="UDP-3-O-ACYLGLUCOSAMINE N-ACYLTRANSFERASE 1, MITOCHONDRIAL-RELATED"/>
    <property type="match status" value="1"/>
</dbReference>
<dbReference type="Pfam" id="PF00132">
    <property type="entry name" value="Hexapep"/>
    <property type="match status" value="2"/>
</dbReference>
<dbReference type="Pfam" id="PF04613">
    <property type="entry name" value="LpxD"/>
    <property type="match status" value="1"/>
</dbReference>
<dbReference type="SUPFAM" id="SSF51161">
    <property type="entry name" value="Trimeric LpxA-like enzymes"/>
    <property type="match status" value="1"/>
</dbReference>
<dbReference type="PROSITE" id="PS00101">
    <property type="entry name" value="HEXAPEP_TRANSFERASES"/>
    <property type="match status" value="2"/>
</dbReference>
<proteinExistence type="inferred from homology"/>
<gene>
    <name evidence="1" type="primary">lpxD</name>
    <name type="ordered locus">P9515_07941</name>
</gene>
<organism>
    <name type="scientific">Prochlorococcus marinus (strain MIT 9515)</name>
    <dbReference type="NCBI Taxonomy" id="167542"/>
    <lineage>
        <taxon>Bacteria</taxon>
        <taxon>Bacillati</taxon>
        <taxon>Cyanobacteriota</taxon>
        <taxon>Cyanophyceae</taxon>
        <taxon>Synechococcales</taxon>
        <taxon>Prochlorococcaceae</taxon>
        <taxon>Prochlorococcus</taxon>
    </lineage>
</organism>
<name>LPXD_PROM5</name>